<accession>Q5QJC4</accession>
<organism>
    <name type="scientific">Gallus gallus</name>
    <name type="common">Chicken</name>
    <dbReference type="NCBI Taxonomy" id="9031"/>
    <lineage>
        <taxon>Eukaryota</taxon>
        <taxon>Metazoa</taxon>
        <taxon>Chordata</taxon>
        <taxon>Craniata</taxon>
        <taxon>Vertebrata</taxon>
        <taxon>Euteleostomi</taxon>
        <taxon>Archelosauria</taxon>
        <taxon>Archosauria</taxon>
        <taxon>Dinosauria</taxon>
        <taxon>Saurischia</taxon>
        <taxon>Theropoda</taxon>
        <taxon>Coelurosauria</taxon>
        <taxon>Aves</taxon>
        <taxon>Neognathae</taxon>
        <taxon>Galloanserae</taxon>
        <taxon>Galliformes</taxon>
        <taxon>Phasianidae</taxon>
        <taxon>Phasianinae</taxon>
        <taxon>Gallus</taxon>
    </lineage>
</organism>
<name>DCR1A_CHICK</name>
<protein>
    <recommendedName>
        <fullName>DNA cross-link repair 1A protein</fullName>
    </recommendedName>
    <alternativeName>
        <fullName>Beta-lactamase MBLAC2</fullName>
        <ecNumber evidence="2">3.5.2.6</ecNumber>
    </alternativeName>
    <alternativeName>
        <fullName>SNM1 homolog A</fullName>
        <shortName>chSNM1A</shortName>
    </alternativeName>
</protein>
<sequence>MSEDVLLEEDIWEYKSIRKRKPQSNPDSTSVSMQTVTKGKCRPKRKGSGNRKKSVEKNSTPQKSEQRLRPSEDLDPCKDDSSVYAQESVSSLTEQGSPSTRPVCDGYCPSCQMPFSLLVVQTPRWHVAECLDTPGSVEKECPDGLLCTSTIPSHYKRYSHFLLAASRAGEYLVNSTANTVERKMTCSTAAKSSCFPSPVEDSQAEKPSKNLKNVPNNECTSKIKDSEQRKSLNITSESTSSFADVQKPQQVFQLTQTTDNSCKFEFYDFTSSQESVSEDLCSQKDTSQPSLLQSKADFSDWEISYSPLSTCEESEGEAEEEKEVKTSQNKLLKVQNFEGPESNTEVFKFKKQHCEEINTSSCLYHSEKSASQSHVDSKCSNSPCVDNQQEMLSAESSFPLNCNQEFQQPGLLSPAINTGNKESQDKGACVLDSVYSCLTRTQSLLLTEGGRSPLSQKNKVLRAPSVVLTNTDKMTADATEKGTCQESLQPAVKKEENLDSTGVCFPSPISKTVSSHSLASMNAKSSPAKELKQMDIGVFFGLKPKVKEESKGEACLSEGKQIPSSVAPSGKRPRQQKRKAEGSVEDLEAVEESSNKDGGDANVTSGGQRKWRKRFRESSTTDEGARKKQCPFYKKIPGTGFTVDAFQYGEIEGCTAYFLTHFHSDHYCGLTKNFVFPLYCNKITGNLVKSKLRVKEQYINVLPMDTECIVNGIKVLLLDANHCPGATMILFYLPSGTAILHTGDFRADPSMERYPALIGQKIHTLYLDTTYCSPEYTFPSQQEVIQFAVNTAFEMVTLNPRTLVVCGTYSIGKEKVFLAIAEVLGSKASMSRDKYKTLQCLESAAVNSLITMNWDGTLLHILPMMQINFKGLQDHLNKFSENFDQVLAFKPTGWTYSDSCLSVMDIKPQTRGNITIYGIPYSEHSSYLEMKRFVQWLKPQKIIPTVNVGDWRARSLMEKHFRDWMIEGSGHK</sequence>
<dbReference type="EC" id="3.5.2.6" evidence="2"/>
<dbReference type="EMBL" id="AY376896">
    <property type="protein sequence ID" value="AAR27404.1"/>
    <property type="molecule type" value="mRNA"/>
</dbReference>
<dbReference type="RefSeq" id="NP_001008683.1">
    <property type="nucleotide sequence ID" value="NM_001008683.2"/>
</dbReference>
<dbReference type="SMR" id="Q5QJC4"/>
<dbReference type="FunCoup" id="Q5QJC4">
    <property type="interactions" value="474"/>
</dbReference>
<dbReference type="STRING" id="9031.ENSGALP00000032457"/>
<dbReference type="PaxDb" id="9031-ENSGALP00000032457"/>
<dbReference type="GeneID" id="423902"/>
<dbReference type="KEGG" id="gga:423902"/>
<dbReference type="CTD" id="9937"/>
<dbReference type="VEuPathDB" id="HostDB:geneid_423902"/>
<dbReference type="eggNOG" id="KOG1361">
    <property type="taxonomic scope" value="Eukaryota"/>
</dbReference>
<dbReference type="InParanoid" id="Q5QJC4"/>
<dbReference type="OMA" id="FRFPIYC"/>
<dbReference type="OrthoDB" id="262529at2759"/>
<dbReference type="PhylomeDB" id="Q5QJC4"/>
<dbReference type="Reactome" id="R-GGA-353248">
    <property type="pathway name" value="DNA damage recognition in global genomic repair"/>
</dbReference>
<dbReference type="Reactome" id="R-GGA-353303">
    <property type="pathway name" value="Nucleotide Excision Repair"/>
</dbReference>
<dbReference type="PRO" id="PR:Q5QJC4"/>
<dbReference type="Proteomes" id="UP000000539">
    <property type="component" value="Unassembled WGS sequence"/>
</dbReference>
<dbReference type="GO" id="GO:0005654">
    <property type="term" value="C:nucleoplasm"/>
    <property type="evidence" value="ECO:0000304"/>
    <property type="project" value="Reactome"/>
</dbReference>
<dbReference type="GO" id="GO:0035312">
    <property type="term" value="F:5'-3' DNA exonuclease activity"/>
    <property type="evidence" value="ECO:0000318"/>
    <property type="project" value="GO_Central"/>
</dbReference>
<dbReference type="GO" id="GO:0008800">
    <property type="term" value="F:beta-lactamase activity"/>
    <property type="evidence" value="ECO:0000250"/>
    <property type="project" value="UniProtKB"/>
</dbReference>
<dbReference type="GO" id="GO:0003684">
    <property type="term" value="F:damaged DNA binding"/>
    <property type="evidence" value="ECO:0000318"/>
    <property type="project" value="GO_Central"/>
</dbReference>
<dbReference type="GO" id="GO:0008270">
    <property type="term" value="F:zinc ion binding"/>
    <property type="evidence" value="ECO:0007669"/>
    <property type="project" value="UniProtKB-KW"/>
</dbReference>
<dbReference type="GO" id="GO:0006303">
    <property type="term" value="P:double-strand break repair via nonhomologous end joining"/>
    <property type="evidence" value="ECO:0000318"/>
    <property type="project" value="GO_Central"/>
</dbReference>
<dbReference type="GO" id="GO:0036297">
    <property type="term" value="P:interstrand cross-link repair"/>
    <property type="evidence" value="ECO:0000318"/>
    <property type="project" value="GO_Central"/>
</dbReference>
<dbReference type="CDD" id="cd16298">
    <property type="entry name" value="SNM1A-like_MBL-fold"/>
    <property type="match status" value="1"/>
</dbReference>
<dbReference type="FunFam" id="3.40.50.12650:FF:000001">
    <property type="entry name" value="DNA cross-link repair 1A"/>
    <property type="match status" value="1"/>
</dbReference>
<dbReference type="FunFam" id="3.60.15.10:FF:000010">
    <property type="entry name" value="DNA cross-link repair 1A"/>
    <property type="match status" value="1"/>
</dbReference>
<dbReference type="Gene3D" id="3.40.50.12650">
    <property type="match status" value="1"/>
</dbReference>
<dbReference type="Gene3D" id="3.60.15.10">
    <property type="entry name" value="Ribonuclease Z/Hydroxyacylglutathione hydrolase-like"/>
    <property type="match status" value="1"/>
</dbReference>
<dbReference type="InterPro" id="IPR011084">
    <property type="entry name" value="DRMBL"/>
</dbReference>
<dbReference type="InterPro" id="IPR006642">
    <property type="entry name" value="Rad18_UBZ4"/>
</dbReference>
<dbReference type="InterPro" id="IPR036866">
    <property type="entry name" value="RibonucZ/Hydroxyglut_hydro"/>
</dbReference>
<dbReference type="PANTHER" id="PTHR23240:SF6">
    <property type="entry name" value="DNA CROSS-LINK REPAIR 1A PROTEIN"/>
    <property type="match status" value="1"/>
</dbReference>
<dbReference type="PANTHER" id="PTHR23240">
    <property type="entry name" value="DNA CROSS-LINK REPAIR PROTEIN PSO2/SNM1-RELATED"/>
    <property type="match status" value="1"/>
</dbReference>
<dbReference type="Pfam" id="PF07522">
    <property type="entry name" value="DRMBL"/>
    <property type="match status" value="1"/>
</dbReference>
<dbReference type="SUPFAM" id="SSF56281">
    <property type="entry name" value="Metallo-hydrolase/oxidoreductase"/>
    <property type="match status" value="1"/>
</dbReference>
<dbReference type="PROSITE" id="PS51908">
    <property type="entry name" value="ZF_UBZ4"/>
    <property type="match status" value="1"/>
</dbReference>
<feature type="chain" id="PRO_0000209118" description="DNA cross-link repair 1A protein">
    <location>
        <begin position="1"/>
        <end position="972"/>
    </location>
</feature>
<feature type="zinc finger region" description="UBZ4-type" evidence="3">
    <location>
        <begin position="105"/>
        <end position="135"/>
    </location>
</feature>
<feature type="region of interest" description="Disordered" evidence="4">
    <location>
        <begin position="14"/>
        <end position="80"/>
    </location>
</feature>
<feature type="region of interest" description="Disordered" evidence="4">
    <location>
        <begin position="191"/>
        <end position="219"/>
    </location>
</feature>
<feature type="region of interest" description="Disordered" evidence="4">
    <location>
        <begin position="552"/>
        <end position="623"/>
    </location>
</feature>
<feature type="compositionally biased region" description="Polar residues" evidence="4">
    <location>
        <begin position="23"/>
        <end position="37"/>
    </location>
</feature>
<feature type="compositionally biased region" description="Basic residues" evidence="4">
    <location>
        <begin position="39"/>
        <end position="54"/>
    </location>
</feature>
<feature type="compositionally biased region" description="Basic and acidic residues" evidence="4">
    <location>
        <begin position="64"/>
        <end position="80"/>
    </location>
</feature>
<feature type="compositionally biased region" description="Polar residues" evidence="4">
    <location>
        <begin position="210"/>
        <end position="219"/>
    </location>
</feature>
<feature type="binding site" evidence="3">
    <location>
        <position position="108"/>
    </location>
    <ligand>
        <name>Zn(2+)</name>
        <dbReference type="ChEBI" id="CHEBI:29105"/>
    </ligand>
</feature>
<feature type="binding site" evidence="3">
    <location>
        <position position="111"/>
    </location>
    <ligand>
        <name>Zn(2+)</name>
        <dbReference type="ChEBI" id="CHEBI:29105"/>
    </ligand>
</feature>
<feature type="binding site" evidence="3">
    <location>
        <position position="126"/>
    </location>
    <ligand>
        <name>Zn(2+)</name>
        <dbReference type="ChEBI" id="CHEBI:29105"/>
    </ligand>
</feature>
<feature type="binding site" evidence="3">
    <location>
        <position position="130"/>
    </location>
    <ligand>
        <name>Zn(2+)</name>
        <dbReference type="ChEBI" id="CHEBI:29105"/>
    </ligand>
</feature>
<reference key="1">
    <citation type="journal article" date="2004" name="Mol. Cell. Biol.">
        <title>DNA cross-link repair protein SNM1A interacts with PIAS1 in nuclear focus formation.</title>
        <authorList>
            <person name="Ishiai M."/>
            <person name="Kimura M."/>
            <person name="Namikoshi K."/>
            <person name="Yamazoe M."/>
            <person name="Yamamoto K."/>
            <person name="Arakawa H."/>
            <person name="Agematsu K."/>
            <person name="Matsushita N."/>
            <person name="Takeda S."/>
            <person name="Buerstedde J.-M."/>
            <person name="Takata M."/>
        </authorList>
    </citation>
    <scope>NUCLEOTIDE SEQUENCE [MRNA]</scope>
    <scope>FUNCTION</scope>
    <scope>INTERACTION WITH PIAS1</scope>
</reference>
<evidence type="ECO:0000250" key="1"/>
<evidence type="ECO:0000250" key="2">
    <source>
        <dbReference type="UniProtKB" id="Q6PJP8"/>
    </source>
</evidence>
<evidence type="ECO:0000255" key="3">
    <source>
        <dbReference type="PROSITE-ProRule" id="PRU01256"/>
    </source>
</evidence>
<evidence type="ECO:0000256" key="4">
    <source>
        <dbReference type="SAM" id="MobiDB-lite"/>
    </source>
</evidence>
<evidence type="ECO:0000269" key="5">
    <source>
    </source>
</evidence>
<evidence type="ECO:0000305" key="6"/>
<comment type="function">
    <text evidence="5">May be required for DNA interstrand cross-link repair.</text>
</comment>
<comment type="catalytic activity">
    <reaction evidence="2">
        <text>a beta-lactam + H2O = a substituted beta-amino acid</text>
        <dbReference type="Rhea" id="RHEA:20401"/>
        <dbReference type="ChEBI" id="CHEBI:15377"/>
        <dbReference type="ChEBI" id="CHEBI:35627"/>
        <dbReference type="ChEBI" id="CHEBI:140347"/>
        <dbReference type="EC" id="3.5.2.6"/>
    </reaction>
</comment>
<comment type="subunit">
    <text>Binds PIAS1.</text>
</comment>
<comment type="subcellular location">
    <subcellularLocation>
        <location evidence="1">Nucleus</location>
    </subcellularLocation>
</comment>
<comment type="similarity">
    <text evidence="6">Belongs to the DNA repair metallo-beta-lactamase (DRMBL) family.</text>
</comment>
<keyword id="KW-0227">DNA damage</keyword>
<keyword id="KW-0234">DNA repair</keyword>
<keyword id="KW-0378">Hydrolase</keyword>
<keyword id="KW-0479">Metal-binding</keyword>
<keyword id="KW-0539">Nucleus</keyword>
<keyword id="KW-1185">Reference proteome</keyword>
<keyword id="KW-0862">Zinc</keyword>
<keyword id="KW-0863">Zinc-finger</keyword>
<gene>
    <name type="primary">DCLRE1A</name>
    <name type="synonym">SNM1A</name>
</gene>
<proteinExistence type="evidence at protein level"/>